<sequence length="416" mass="47471">MELRVGNKYRLGRKIGSGSFGDIYLGANIATGEEVAIKLECVKTKHPQLHIESKFYKMMQGGVGIPSIKWCGAEGDYNVMVMELLGPSLEDLFNFCSRKFSLKTVLLLADQMISRIEYIHSKNFIHRDVKPDNFLMGLGKKGNLVYIIDFGLAKKYRDARTHQHIPYRENKNLTGTARYASINTHLGIEQSRRDDLESLGYVLMYFNLGSLPWQGLKAATKRQKYERISEKKMSTPIEVLCKGYPSEFSTYLNFCRSLRFDDKPDYSYLRQLFRNLFHRQGFSYDYVFDWNMLKFGAARNPEDMDRERREHEREERMGQLRGSATRALPPGPPAGATGNRLRNVAEPMASTPTSRIQQSGNTSPRAISRVDRERKVSMRLHRGAPANVSSSDLTGRQEVSRISASQTSVPFDHLGK</sequence>
<feature type="chain" id="PRO_0000273635" description="Casein kinase I isoform epsilon">
    <location>
        <begin position="1"/>
        <end position="416"/>
    </location>
</feature>
<feature type="domain" description="Protein kinase" evidence="4">
    <location>
        <begin position="9"/>
        <end position="277"/>
    </location>
</feature>
<feature type="region of interest" description="Disordered" evidence="6">
    <location>
        <begin position="301"/>
        <end position="416"/>
    </location>
</feature>
<feature type="compositionally biased region" description="Basic and acidic residues" evidence="6">
    <location>
        <begin position="301"/>
        <end position="318"/>
    </location>
</feature>
<feature type="compositionally biased region" description="Low complexity" evidence="6">
    <location>
        <begin position="324"/>
        <end position="338"/>
    </location>
</feature>
<feature type="compositionally biased region" description="Polar residues" evidence="6">
    <location>
        <begin position="350"/>
        <end position="365"/>
    </location>
</feature>
<feature type="compositionally biased region" description="Polar residues" evidence="6">
    <location>
        <begin position="400"/>
        <end position="409"/>
    </location>
</feature>
<feature type="active site" description="Proton acceptor" evidence="4 5">
    <location>
        <position position="128"/>
    </location>
</feature>
<feature type="binding site" evidence="4">
    <location>
        <begin position="15"/>
        <end position="23"/>
    </location>
    <ligand>
        <name>ATP</name>
        <dbReference type="ChEBI" id="CHEBI:30616"/>
    </ligand>
</feature>
<feature type="binding site" evidence="4">
    <location>
        <position position="38"/>
    </location>
    <ligand>
        <name>ATP</name>
        <dbReference type="ChEBI" id="CHEBI:30616"/>
    </ligand>
</feature>
<feature type="sequence conflict" description="In Ref. 2; CAG31382." evidence="7" ref="2">
    <original>K</original>
    <variation>R</variation>
    <location>
        <position position="99"/>
    </location>
</feature>
<feature type="sequence conflict" description="In Ref. 1; AAP87440." evidence="7" ref="1">
    <original>PWQGLK</original>
    <variation>ALAGPQ</variation>
    <location>
        <begin position="212"/>
        <end position="217"/>
    </location>
</feature>
<feature type="sequence conflict" description="In Ref. 3; AAP47012." evidence="7" ref="3">
    <original>A</original>
    <variation>T</variation>
    <location>
        <position position="336"/>
    </location>
</feature>
<feature type="sequence conflict" description="In Ref. 1; AAP87440." evidence="7" ref="1">
    <original>A</original>
    <variation>V</variation>
    <location>
        <position position="345"/>
    </location>
</feature>
<feature type="sequence conflict" description="In Ref. 1; AAP87440." evidence="7" ref="1">
    <original>E</original>
    <variation>V</variation>
    <location>
        <position position="398"/>
    </location>
</feature>
<proteinExistence type="evidence at transcript level"/>
<organism>
    <name type="scientific">Gallus gallus</name>
    <name type="common">Chicken</name>
    <dbReference type="NCBI Taxonomy" id="9031"/>
    <lineage>
        <taxon>Eukaryota</taxon>
        <taxon>Metazoa</taxon>
        <taxon>Chordata</taxon>
        <taxon>Craniata</taxon>
        <taxon>Vertebrata</taxon>
        <taxon>Euteleostomi</taxon>
        <taxon>Archelosauria</taxon>
        <taxon>Archosauria</taxon>
        <taxon>Dinosauria</taxon>
        <taxon>Saurischia</taxon>
        <taxon>Theropoda</taxon>
        <taxon>Coelurosauria</taxon>
        <taxon>Aves</taxon>
        <taxon>Neognathae</taxon>
        <taxon>Galloanserae</taxon>
        <taxon>Galliformes</taxon>
        <taxon>Phasianidae</taxon>
        <taxon>Phasianinae</taxon>
        <taxon>Gallus</taxon>
    </lineage>
</organism>
<keyword id="KW-0067">ATP-binding</keyword>
<keyword id="KW-0090">Biological rhythms</keyword>
<keyword id="KW-0963">Cytoplasm</keyword>
<keyword id="KW-0418">Kinase</keyword>
<keyword id="KW-0547">Nucleotide-binding</keyword>
<keyword id="KW-1185">Reference proteome</keyword>
<keyword id="KW-0723">Serine/threonine-protein kinase</keyword>
<keyword id="KW-0808">Transferase</keyword>
<protein>
    <recommendedName>
        <fullName>Casein kinase I isoform epsilon</fullName>
        <shortName>CKI-epsilon</shortName>
        <shortName>CKIe</shortName>
        <ecNumber>2.7.11.1</ecNumber>
    </recommendedName>
</protein>
<evidence type="ECO:0000250" key="1"/>
<evidence type="ECO:0000250" key="2">
    <source>
        <dbReference type="UniProtKB" id="P49674"/>
    </source>
</evidence>
<evidence type="ECO:0000250" key="3">
    <source>
        <dbReference type="UniProtKB" id="Q9JMK2"/>
    </source>
</evidence>
<evidence type="ECO:0000255" key="4">
    <source>
        <dbReference type="PROSITE-ProRule" id="PRU00159"/>
    </source>
</evidence>
<evidence type="ECO:0000255" key="5">
    <source>
        <dbReference type="PROSITE-ProRule" id="PRU10027"/>
    </source>
</evidence>
<evidence type="ECO:0000256" key="6">
    <source>
        <dbReference type="SAM" id="MobiDB-lite"/>
    </source>
</evidence>
<evidence type="ECO:0000305" key="7"/>
<accession>Q5ZLL1</accession>
<accession>Q7T1G2</accession>
<accession>Q7T3L8</accession>
<comment type="function">
    <text evidence="1">Casein kinases are operationally defined by their preferential utilization of acidic proteins such as caseins as substrates. Can phosphorylate a large number of proteins. Participates in Wnt signaling. Phosphorylates DVL1. Central component of the circadian clock. May act as a negative regulator of circadian rhythmicity by phosphorylating PER1 and PER2. Retains PER1 in the cytoplasm (By similarity).</text>
</comment>
<comment type="catalytic activity">
    <reaction>
        <text>L-seryl-[protein] + ATP = O-phospho-L-seryl-[protein] + ADP + H(+)</text>
        <dbReference type="Rhea" id="RHEA:17989"/>
        <dbReference type="Rhea" id="RHEA-COMP:9863"/>
        <dbReference type="Rhea" id="RHEA-COMP:11604"/>
        <dbReference type="ChEBI" id="CHEBI:15378"/>
        <dbReference type="ChEBI" id="CHEBI:29999"/>
        <dbReference type="ChEBI" id="CHEBI:30616"/>
        <dbReference type="ChEBI" id="CHEBI:83421"/>
        <dbReference type="ChEBI" id="CHEBI:456216"/>
        <dbReference type="EC" id="2.7.11.1"/>
    </reaction>
</comment>
<comment type="catalytic activity">
    <reaction>
        <text>L-threonyl-[protein] + ATP = O-phospho-L-threonyl-[protein] + ADP + H(+)</text>
        <dbReference type="Rhea" id="RHEA:46608"/>
        <dbReference type="Rhea" id="RHEA-COMP:11060"/>
        <dbReference type="Rhea" id="RHEA-COMP:11605"/>
        <dbReference type="ChEBI" id="CHEBI:15378"/>
        <dbReference type="ChEBI" id="CHEBI:30013"/>
        <dbReference type="ChEBI" id="CHEBI:30616"/>
        <dbReference type="ChEBI" id="CHEBI:61977"/>
        <dbReference type="ChEBI" id="CHEBI:456216"/>
        <dbReference type="EC" id="2.7.11.1"/>
    </reaction>
</comment>
<comment type="subunit">
    <text evidence="2 3">Monomer (By similarity). Component of the circadian core oscillator, which includes the CRY proteins, CLOCK, or NPAS2, BMAL1 or BMAL2, CSNK1E, and the PER proteins (By similarity).</text>
</comment>
<comment type="subcellular location">
    <subcellularLocation>
        <location evidence="1">Cytoplasm</location>
    </subcellularLocation>
</comment>
<comment type="similarity">
    <text evidence="7">Belongs to the protein kinase superfamily. CK1 Ser/Thr protein kinase family. Casein kinase I subfamily.</text>
</comment>
<name>KC1E_CHICK</name>
<dbReference type="EC" id="2.7.11.1"/>
<dbReference type="EMBL" id="AF401599">
    <property type="protein sequence ID" value="AAP87440.1"/>
    <property type="molecule type" value="mRNA"/>
</dbReference>
<dbReference type="EMBL" id="AJ719723">
    <property type="protein sequence ID" value="CAG31382.1"/>
    <property type="molecule type" value="mRNA"/>
</dbReference>
<dbReference type="EMBL" id="AY046571">
    <property type="protein sequence ID" value="AAP47012.1"/>
    <property type="molecule type" value="mRNA"/>
</dbReference>
<dbReference type="RefSeq" id="NP_989708.3">
    <property type="nucleotide sequence ID" value="NM_204377.4"/>
</dbReference>
<dbReference type="RefSeq" id="XP_046754244.1">
    <property type="nucleotide sequence ID" value="XM_046898288.1"/>
</dbReference>
<dbReference type="RefSeq" id="XP_046754256.1">
    <property type="nucleotide sequence ID" value="XM_046898300.1"/>
</dbReference>
<dbReference type="RefSeq" id="XP_046762398.1">
    <property type="nucleotide sequence ID" value="XM_046906442.1"/>
</dbReference>
<dbReference type="RefSeq" id="XP_046762399.1">
    <property type="nucleotide sequence ID" value="XM_046906443.1"/>
</dbReference>
<dbReference type="SMR" id="Q5ZLL1"/>
<dbReference type="FunCoup" id="Q5ZLL1">
    <property type="interactions" value="2729"/>
</dbReference>
<dbReference type="STRING" id="9031.ENSGALP00000053098"/>
<dbReference type="PaxDb" id="9031-ENSGALP00000029961"/>
<dbReference type="GeneID" id="378891"/>
<dbReference type="KEGG" id="gga:378891"/>
<dbReference type="CTD" id="1454"/>
<dbReference type="VEuPathDB" id="HostDB:geneid_378891"/>
<dbReference type="eggNOG" id="KOG1164">
    <property type="taxonomic scope" value="Eukaryota"/>
</dbReference>
<dbReference type="InParanoid" id="Q5ZLL1"/>
<dbReference type="OMA" id="AKFYKMM"/>
<dbReference type="OrthoDB" id="5800476at2759"/>
<dbReference type="PhylomeDB" id="Q5ZLL1"/>
<dbReference type="Reactome" id="R-GGA-201688">
    <property type="pathway name" value="WNT mediated activation of DVL"/>
</dbReference>
<dbReference type="Reactome" id="R-GGA-2565942">
    <property type="pathway name" value="Regulation of PLK1 Activity at G2/M Transition"/>
</dbReference>
<dbReference type="Reactome" id="R-GGA-380259">
    <property type="pathway name" value="Loss of Nlp from mitotic centrosomes"/>
</dbReference>
<dbReference type="Reactome" id="R-GGA-380270">
    <property type="pathway name" value="Recruitment of mitotic centrosome proteins and complexes"/>
</dbReference>
<dbReference type="Reactome" id="R-GGA-380284">
    <property type="pathway name" value="Loss of proteins required for interphase microtubule organization from the centrosome"/>
</dbReference>
<dbReference type="Reactome" id="R-GGA-380320">
    <property type="pathway name" value="Recruitment of NuMA to mitotic centrosomes"/>
</dbReference>
<dbReference type="Reactome" id="R-GGA-5620912">
    <property type="pathway name" value="Anchoring of the basal body to the plasma membrane"/>
</dbReference>
<dbReference type="Reactome" id="R-GGA-8854518">
    <property type="pathway name" value="AURKA Activation by TPX2"/>
</dbReference>
<dbReference type="PRO" id="PR:Q5ZLL1"/>
<dbReference type="Proteomes" id="UP000000539">
    <property type="component" value="Chromosome 1"/>
</dbReference>
<dbReference type="Bgee" id="ENSGALG00000032257">
    <property type="expression patterns" value="Expressed in testis and 12 other cell types or tissues"/>
</dbReference>
<dbReference type="GO" id="GO:0005737">
    <property type="term" value="C:cytoplasm"/>
    <property type="evidence" value="ECO:0000318"/>
    <property type="project" value="GO_Central"/>
</dbReference>
<dbReference type="GO" id="GO:0005634">
    <property type="term" value="C:nucleus"/>
    <property type="evidence" value="ECO:0000318"/>
    <property type="project" value="GO_Central"/>
</dbReference>
<dbReference type="GO" id="GO:0005524">
    <property type="term" value="F:ATP binding"/>
    <property type="evidence" value="ECO:0007669"/>
    <property type="project" value="UniProtKB-KW"/>
</dbReference>
<dbReference type="GO" id="GO:0004672">
    <property type="term" value="F:protein kinase activity"/>
    <property type="evidence" value="ECO:0000250"/>
    <property type="project" value="UniProtKB"/>
</dbReference>
<dbReference type="GO" id="GO:0106310">
    <property type="term" value="F:protein serine kinase activity"/>
    <property type="evidence" value="ECO:0007669"/>
    <property type="project" value="RHEA"/>
</dbReference>
<dbReference type="GO" id="GO:0004674">
    <property type="term" value="F:protein serine/threonine kinase activity"/>
    <property type="evidence" value="ECO:0000318"/>
    <property type="project" value="GO_Central"/>
</dbReference>
<dbReference type="GO" id="GO:0006897">
    <property type="term" value="P:endocytosis"/>
    <property type="evidence" value="ECO:0000318"/>
    <property type="project" value="GO_Central"/>
</dbReference>
<dbReference type="GO" id="GO:0090263">
    <property type="term" value="P:positive regulation of canonical Wnt signaling pathway"/>
    <property type="evidence" value="ECO:0000318"/>
    <property type="project" value="GO_Central"/>
</dbReference>
<dbReference type="GO" id="GO:0032436">
    <property type="term" value="P:positive regulation of proteasomal ubiquitin-dependent protein catabolic process"/>
    <property type="evidence" value="ECO:0000250"/>
    <property type="project" value="UniProtKB"/>
</dbReference>
<dbReference type="GO" id="GO:0006468">
    <property type="term" value="P:protein phosphorylation"/>
    <property type="evidence" value="ECO:0000250"/>
    <property type="project" value="UniProtKB"/>
</dbReference>
<dbReference type="GO" id="GO:0048511">
    <property type="term" value="P:rhythmic process"/>
    <property type="evidence" value="ECO:0007669"/>
    <property type="project" value="UniProtKB-KW"/>
</dbReference>
<dbReference type="GO" id="GO:0007165">
    <property type="term" value="P:signal transduction"/>
    <property type="evidence" value="ECO:0000318"/>
    <property type="project" value="GO_Central"/>
</dbReference>
<dbReference type="CDD" id="cd14125">
    <property type="entry name" value="STKc_CK1_delta_epsilon"/>
    <property type="match status" value="1"/>
</dbReference>
<dbReference type="FunFam" id="1.10.510.10:FF:000194">
    <property type="entry name" value="Casein kinase I isoform delta"/>
    <property type="match status" value="1"/>
</dbReference>
<dbReference type="FunFam" id="3.30.200.20:FF:000538">
    <property type="entry name" value="Putative Casein kinase I"/>
    <property type="match status" value="1"/>
</dbReference>
<dbReference type="Gene3D" id="1.10.510.10">
    <property type="entry name" value="Transferase(Phosphotransferase) domain 1"/>
    <property type="match status" value="1"/>
</dbReference>
<dbReference type="InterPro" id="IPR050235">
    <property type="entry name" value="CK1_Ser-Thr_kinase"/>
</dbReference>
<dbReference type="InterPro" id="IPR011009">
    <property type="entry name" value="Kinase-like_dom_sf"/>
</dbReference>
<dbReference type="InterPro" id="IPR000719">
    <property type="entry name" value="Prot_kinase_dom"/>
</dbReference>
<dbReference type="InterPro" id="IPR017441">
    <property type="entry name" value="Protein_kinase_ATP_BS"/>
</dbReference>
<dbReference type="InterPro" id="IPR008271">
    <property type="entry name" value="Ser/Thr_kinase_AS"/>
</dbReference>
<dbReference type="PANTHER" id="PTHR11909">
    <property type="entry name" value="CASEIN KINASE-RELATED"/>
    <property type="match status" value="1"/>
</dbReference>
<dbReference type="Pfam" id="PF00069">
    <property type="entry name" value="Pkinase"/>
    <property type="match status" value="1"/>
</dbReference>
<dbReference type="SMART" id="SM00220">
    <property type="entry name" value="S_TKc"/>
    <property type="match status" value="1"/>
</dbReference>
<dbReference type="SUPFAM" id="SSF56112">
    <property type="entry name" value="Protein kinase-like (PK-like)"/>
    <property type="match status" value="1"/>
</dbReference>
<dbReference type="PROSITE" id="PS00107">
    <property type="entry name" value="PROTEIN_KINASE_ATP"/>
    <property type="match status" value="1"/>
</dbReference>
<dbReference type="PROSITE" id="PS50011">
    <property type="entry name" value="PROTEIN_KINASE_DOM"/>
    <property type="match status" value="1"/>
</dbReference>
<dbReference type="PROSITE" id="PS00108">
    <property type="entry name" value="PROTEIN_KINASE_ST"/>
    <property type="match status" value="1"/>
</dbReference>
<gene>
    <name type="primary">CSNK1E</name>
    <name type="synonym">DBT</name>
    <name type="ORF">RCJMB04_5k10</name>
</gene>
<reference key="1">
    <citation type="submission" date="2001-07" db="EMBL/GenBank/DDBJ databases">
        <authorList>
            <person name="Chong N.W."/>
        </authorList>
    </citation>
    <scope>NUCLEOTIDE SEQUENCE [MRNA]</scope>
</reference>
<reference key="2">
    <citation type="journal article" date="2005" name="Genome Biol.">
        <title>Full-length cDNAs from chicken bursal lymphocytes to facilitate gene function analysis.</title>
        <authorList>
            <person name="Caldwell R.B."/>
            <person name="Kierzek A.M."/>
            <person name="Arakawa H."/>
            <person name="Bezzubov Y."/>
            <person name="Zaim J."/>
            <person name="Fiedler P."/>
            <person name="Kutter S."/>
            <person name="Blagodatski A."/>
            <person name="Kostovska D."/>
            <person name="Koter M."/>
            <person name="Plachy J."/>
            <person name="Carninci P."/>
            <person name="Hayashizaki Y."/>
            <person name="Buerstedde J.-M."/>
        </authorList>
    </citation>
    <scope>NUCLEOTIDE SEQUENCE [LARGE SCALE MRNA]</scope>
    <source>
        <strain>CB</strain>
        <tissue>Bursa of Fabricius</tissue>
    </source>
</reference>
<reference key="3">
    <citation type="submission" date="2001-07" db="EMBL/GenBank/DDBJ databases">
        <title>Analysis of chick Doubletime.</title>
        <authorList>
            <person name="Bailey M.J."/>
            <person name="Cassone V.M."/>
        </authorList>
    </citation>
    <scope>NUCLEOTIDE SEQUENCE [MRNA] OF 1-414</scope>
</reference>